<organism>
    <name type="scientific">Mycobacterium tuberculosis (strain CDC 1551 / Oshkosh)</name>
    <dbReference type="NCBI Taxonomy" id="83331"/>
    <lineage>
        <taxon>Bacteria</taxon>
        <taxon>Bacillati</taxon>
        <taxon>Actinomycetota</taxon>
        <taxon>Actinomycetes</taxon>
        <taxon>Mycobacteriales</taxon>
        <taxon>Mycobacteriaceae</taxon>
        <taxon>Mycobacterium</taxon>
        <taxon>Mycobacterium tuberculosis complex</taxon>
    </lineage>
</organism>
<accession>P9WLH8</accession>
<accession>L0T8Z9</accession>
<accession>Q10510</accession>
<evidence type="ECO:0000255" key="1">
    <source>
        <dbReference type="PROSITE-ProRule" id="PRU01044"/>
    </source>
</evidence>
<evidence type="ECO:0000255" key="2">
    <source>
        <dbReference type="PROSITE-ProRule" id="PRU01045"/>
    </source>
</evidence>
<sequence>MPVEAPRPARHLEVERKFDVIESTVSPSFEGIAAVVRVEQSPTQQLDAVYFDTPSHDLARNQITLRRRTGGADAGWHLKLPAGPDKRTEMRAPLSASGDAVPAELLDVVLAIVRDQPVQPVARISTHRESQILYGAGGDALAEFCNDDVTAWSAGAFHAAGAADNGPAEQQWREWELELVTTDGTADTKLLDRLANRLLDAGAAPAGHGSKLARVLGATSPGELPNGPQPPADPVHRAVSEQVEQLLLWDRAVRADAYDAVHQMRVTTRKIRSLLTDSQESFGLKESAWVIDELRELANVLGVARDAEVLGDRYQRELDALAPELVRGRVRERLVDGARRRYQTGLRRSLIALRSQRYFRLLDALDALVSERAHATSGEESAPVTIDAAYRRVRKAAKAAKTAGDQAGDHHRDEALHLIRKRAKRLRYTAAATGADNVSQEAKVIQTLLGDHQDSVVSREHLIQQAIAANTAGEDTFTYGLLYQQEADLAERCREQLEAALRKLDKAVRKARD</sequence>
<keyword id="KW-1185">Reference proteome</keyword>
<reference key="1">
    <citation type="journal article" date="2002" name="J. Bacteriol.">
        <title>Whole-genome comparison of Mycobacterium tuberculosis clinical and laboratory strains.</title>
        <authorList>
            <person name="Fleischmann R.D."/>
            <person name="Alland D."/>
            <person name="Eisen J.A."/>
            <person name="Carpenter L."/>
            <person name="White O."/>
            <person name="Peterson J.D."/>
            <person name="DeBoy R.T."/>
            <person name="Dodson R.J."/>
            <person name="Gwinn M.L."/>
            <person name="Haft D.H."/>
            <person name="Hickey E.K."/>
            <person name="Kolonay J.F."/>
            <person name="Nelson W.C."/>
            <person name="Umayam L.A."/>
            <person name="Ermolaeva M.D."/>
            <person name="Salzberg S.L."/>
            <person name="Delcher A."/>
            <person name="Utterback T.R."/>
            <person name="Weidman J.F."/>
            <person name="Khouri H.M."/>
            <person name="Gill J."/>
            <person name="Mikula A."/>
            <person name="Bishai W."/>
            <person name="Jacobs W.R. Jr."/>
            <person name="Venter J.C."/>
            <person name="Fraser C.M."/>
        </authorList>
    </citation>
    <scope>NUCLEOTIDE SEQUENCE [LARGE SCALE GENOMIC DNA]</scope>
    <source>
        <strain>CDC 1551 / Oshkosh</strain>
    </source>
</reference>
<protein>
    <recommendedName>
        <fullName>Uncharacterized protein MT2285</fullName>
    </recommendedName>
</protein>
<proteinExistence type="predicted"/>
<name>Y2226_MYCTO</name>
<gene>
    <name type="ordered locus">MT2285</name>
</gene>
<dbReference type="EMBL" id="AE000516">
    <property type="protein sequence ID" value="AAK46570.1"/>
    <property type="molecule type" value="Genomic_DNA"/>
</dbReference>
<dbReference type="PIR" id="F70776">
    <property type="entry name" value="F70776"/>
</dbReference>
<dbReference type="RefSeq" id="WP_003899224.1">
    <property type="nucleotide sequence ID" value="NZ_KK341227.1"/>
</dbReference>
<dbReference type="SMR" id="P9WLH8"/>
<dbReference type="KEGG" id="mtc:MT2285"/>
<dbReference type="PATRIC" id="fig|83331.31.peg.2459"/>
<dbReference type="HOGENOM" id="CLU_026984_1_0_11"/>
<dbReference type="Proteomes" id="UP000001020">
    <property type="component" value="Chromosome"/>
</dbReference>
<dbReference type="CDD" id="cd07374">
    <property type="entry name" value="CYTH-like_Pase"/>
    <property type="match status" value="1"/>
</dbReference>
<dbReference type="FunFam" id="1.40.20.10:FF:000001">
    <property type="entry name" value="Adenylate cyclase, putative"/>
    <property type="match status" value="1"/>
</dbReference>
<dbReference type="Gene3D" id="1.40.20.10">
    <property type="entry name" value="CHAD domain"/>
    <property type="match status" value="1"/>
</dbReference>
<dbReference type="Gene3D" id="2.40.320.10">
    <property type="entry name" value="Hypothetical Protein Pfu-838710-001"/>
    <property type="match status" value="1"/>
</dbReference>
<dbReference type="InterPro" id="IPR007899">
    <property type="entry name" value="CHAD_dom"/>
</dbReference>
<dbReference type="InterPro" id="IPR038186">
    <property type="entry name" value="CHAD_dom_sf"/>
</dbReference>
<dbReference type="InterPro" id="IPR033469">
    <property type="entry name" value="CYTH-like_dom_sf"/>
</dbReference>
<dbReference type="InterPro" id="IPR023577">
    <property type="entry name" value="CYTH_domain"/>
</dbReference>
<dbReference type="PANTHER" id="PTHR39339:SF1">
    <property type="entry name" value="CHAD DOMAIN-CONTAINING PROTEIN"/>
    <property type="match status" value="1"/>
</dbReference>
<dbReference type="PANTHER" id="PTHR39339">
    <property type="entry name" value="SLR1444 PROTEIN"/>
    <property type="match status" value="1"/>
</dbReference>
<dbReference type="Pfam" id="PF05235">
    <property type="entry name" value="CHAD"/>
    <property type="match status" value="1"/>
</dbReference>
<dbReference type="Pfam" id="PF01928">
    <property type="entry name" value="CYTH"/>
    <property type="match status" value="1"/>
</dbReference>
<dbReference type="SMART" id="SM00880">
    <property type="entry name" value="CHAD"/>
    <property type="match status" value="1"/>
</dbReference>
<dbReference type="SMART" id="SM01118">
    <property type="entry name" value="CYTH"/>
    <property type="match status" value="1"/>
</dbReference>
<dbReference type="SUPFAM" id="SSF55154">
    <property type="entry name" value="CYTH-like phosphatases"/>
    <property type="match status" value="1"/>
</dbReference>
<dbReference type="PROSITE" id="PS51708">
    <property type="entry name" value="CHAD"/>
    <property type="match status" value="1"/>
</dbReference>
<dbReference type="PROSITE" id="PS51707">
    <property type="entry name" value="CYTH"/>
    <property type="match status" value="1"/>
</dbReference>
<feature type="chain" id="PRO_0000427476" description="Uncharacterized protein MT2285">
    <location>
        <begin position="1"/>
        <end position="513"/>
    </location>
</feature>
<feature type="domain" description="CYTH" evidence="1">
    <location>
        <begin position="11"/>
        <end position="219"/>
    </location>
</feature>
<feature type="domain" description="CHAD" evidence="2">
    <location>
        <begin position="228"/>
        <end position="506"/>
    </location>
</feature>